<comment type="similarity">
    <text evidence="1">Belongs to the bacterial ribosomal protein bL33 family.</text>
</comment>
<dbReference type="EMBL" id="CP000252">
    <property type="protein sequence ID" value="ABC76165.1"/>
    <property type="molecule type" value="Genomic_DNA"/>
</dbReference>
<dbReference type="SMR" id="Q2LQ94"/>
<dbReference type="STRING" id="56780.SYN_00072"/>
<dbReference type="KEGG" id="sat:SYN_00072"/>
<dbReference type="eggNOG" id="COG0267">
    <property type="taxonomic scope" value="Bacteria"/>
</dbReference>
<dbReference type="HOGENOM" id="CLU_190949_0_2_7"/>
<dbReference type="InParanoid" id="Q2LQ94"/>
<dbReference type="OrthoDB" id="21586at2"/>
<dbReference type="Proteomes" id="UP000001933">
    <property type="component" value="Chromosome"/>
</dbReference>
<dbReference type="GO" id="GO:0005737">
    <property type="term" value="C:cytoplasm"/>
    <property type="evidence" value="ECO:0007669"/>
    <property type="project" value="UniProtKB-ARBA"/>
</dbReference>
<dbReference type="GO" id="GO:1990904">
    <property type="term" value="C:ribonucleoprotein complex"/>
    <property type="evidence" value="ECO:0007669"/>
    <property type="project" value="UniProtKB-KW"/>
</dbReference>
<dbReference type="GO" id="GO:0005840">
    <property type="term" value="C:ribosome"/>
    <property type="evidence" value="ECO:0007669"/>
    <property type="project" value="UniProtKB-KW"/>
</dbReference>
<dbReference type="GO" id="GO:0003735">
    <property type="term" value="F:structural constituent of ribosome"/>
    <property type="evidence" value="ECO:0007669"/>
    <property type="project" value="InterPro"/>
</dbReference>
<dbReference type="GO" id="GO:0006412">
    <property type="term" value="P:translation"/>
    <property type="evidence" value="ECO:0007669"/>
    <property type="project" value="UniProtKB-UniRule"/>
</dbReference>
<dbReference type="Gene3D" id="2.20.28.120">
    <property type="entry name" value="Ribosomal protein L33"/>
    <property type="match status" value="1"/>
</dbReference>
<dbReference type="HAMAP" id="MF_00294">
    <property type="entry name" value="Ribosomal_bL33"/>
    <property type="match status" value="1"/>
</dbReference>
<dbReference type="InterPro" id="IPR001705">
    <property type="entry name" value="Ribosomal_bL33"/>
</dbReference>
<dbReference type="InterPro" id="IPR018264">
    <property type="entry name" value="Ribosomal_bL33_CS"/>
</dbReference>
<dbReference type="InterPro" id="IPR038584">
    <property type="entry name" value="Ribosomal_bL33_sf"/>
</dbReference>
<dbReference type="InterPro" id="IPR011332">
    <property type="entry name" value="Ribosomal_zn-bd"/>
</dbReference>
<dbReference type="NCBIfam" id="NF001764">
    <property type="entry name" value="PRK00504.1"/>
    <property type="match status" value="1"/>
</dbReference>
<dbReference type="NCBIfam" id="NF001860">
    <property type="entry name" value="PRK00595.1"/>
    <property type="match status" value="1"/>
</dbReference>
<dbReference type="NCBIfam" id="TIGR01023">
    <property type="entry name" value="rpmG_bact"/>
    <property type="match status" value="1"/>
</dbReference>
<dbReference type="PANTHER" id="PTHR43168">
    <property type="entry name" value="50S RIBOSOMAL PROTEIN L33, CHLOROPLASTIC"/>
    <property type="match status" value="1"/>
</dbReference>
<dbReference type="PANTHER" id="PTHR43168:SF2">
    <property type="entry name" value="LARGE RIBOSOMAL SUBUNIT PROTEIN BL33C"/>
    <property type="match status" value="1"/>
</dbReference>
<dbReference type="Pfam" id="PF00471">
    <property type="entry name" value="Ribosomal_L33"/>
    <property type="match status" value="1"/>
</dbReference>
<dbReference type="SUPFAM" id="SSF57829">
    <property type="entry name" value="Zn-binding ribosomal proteins"/>
    <property type="match status" value="1"/>
</dbReference>
<dbReference type="PROSITE" id="PS00582">
    <property type="entry name" value="RIBOSOMAL_L33"/>
    <property type="match status" value="1"/>
</dbReference>
<keyword id="KW-1185">Reference proteome</keyword>
<keyword id="KW-0687">Ribonucleoprotein</keyword>
<keyword id="KW-0689">Ribosomal protein</keyword>
<feature type="chain" id="PRO_0000356762" description="Large ribosomal subunit protein bL33">
    <location>
        <begin position="1"/>
        <end position="49"/>
    </location>
</feature>
<name>RL33_SYNAS</name>
<evidence type="ECO:0000255" key="1">
    <source>
        <dbReference type="HAMAP-Rule" id="MF_00294"/>
    </source>
</evidence>
<evidence type="ECO:0000305" key="2"/>
<sequence length="49" mass="6037">MRNIIILACTECKQKNYTTTKNKRTMQGRFEIKKYCRFCRSHKLHRETK</sequence>
<accession>Q2LQ94</accession>
<organism>
    <name type="scientific">Syntrophus aciditrophicus (strain SB)</name>
    <dbReference type="NCBI Taxonomy" id="56780"/>
    <lineage>
        <taxon>Bacteria</taxon>
        <taxon>Pseudomonadati</taxon>
        <taxon>Thermodesulfobacteriota</taxon>
        <taxon>Syntrophia</taxon>
        <taxon>Syntrophales</taxon>
        <taxon>Syntrophaceae</taxon>
        <taxon>Syntrophus</taxon>
    </lineage>
</organism>
<protein>
    <recommendedName>
        <fullName evidence="1">Large ribosomal subunit protein bL33</fullName>
    </recommendedName>
    <alternativeName>
        <fullName evidence="2">50S ribosomal protein L33</fullName>
    </alternativeName>
</protein>
<gene>
    <name evidence="1" type="primary">rpmG</name>
    <name type="ordered locus">SYNAS_02860</name>
    <name type="ORF">SYN_00072</name>
</gene>
<reference key="1">
    <citation type="journal article" date="2007" name="Proc. Natl. Acad. Sci. U.S.A.">
        <title>The genome of Syntrophus aciditrophicus: life at the thermodynamic limit of microbial growth.</title>
        <authorList>
            <person name="McInerney M.J."/>
            <person name="Rohlin L."/>
            <person name="Mouttaki H."/>
            <person name="Kim U."/>
            <person name="Krupp R.S."/>
            <person name="Rios-Hernandez L."/>
            <person name="Sieber J."/>
            <person name="Struchtemeyer C.G."/>
            <person name="Bhattacharyya A."/>
            <person name="Campbell J.W."/>
            <person name="Gunsalus R.P."/>
        </authorList>
    </citation>
    <scope>NUCLEOTIDE SEQUENCE [LARGE SCALE GENOMIC DNA]</scope>
    <source>
        <strain>SB</strain>
    </source>
</reference>
<proteinExistence type="inferred from homology"/>